<protein>
    <recommendedName>
        <fullName>Zinc finger A20 and AN1 domain-containing stress-associated protein 8</fullName>
        <shortName>OsSAP8</shortName>
    </recommendedName>
    <alternativeName>
        <fullName>Stress-associated protein 3</fullName>
    </alternativeName>
</protein>
<feature type="chain" id="PRO_0000303674" description="Zinc finger A20 and AN1 domain-containing stress-associated protein 8">
    <location>
        <begin position="1"/>
        <end position="171"/>
    </location>
</feature>
<feature type="zinc finger region" description="A20-type" evidence="3">
    <location>
        <begin position="11"/>
        <end position="45"/>
    </location>
</feature>
<feature type="zinc finger region" description="AN1-type" evidence="2">
    <location>
        <begin position="106"/>
        <end position="152"/>
    </location>
</feature>
<feature type="binding site" evidence="3">
    <location>
        <position position="17"/>
    </location>
    <ligand>
        <name>Zn(2+)</name>
        <dbReference type="ChEBI" id="CHEBI:29105"/>
        <label>1</label>
    </ligand>
</feature>
<feature type="binding site" evidence="3">
    <location>
        <position position="21"/>
    </location>
    <ligand>
        <name>Zn(2+)</name>
        <dbReference type="ChEBI" id="CHEBI:29105"/>
        <label>1</label>
    </ligand>
</feature>
<feature type="binding site" evidence="3">
    <location>
        <position position="33"/>
    </location>
    <ligand>
        <name>Zn(2+)</name>
        <dbReference type="ChEBI" id="CHEBI:29105"/>
        <label>1</label>
    </ligand>
</feature>
<feature type="binding site" evidence="3">
    <location>
        <position position="36"/>
    </location>
    <ligand>
        <name>Zn(2+)</name>
        <dbReference type="ChEBI" id="CHEBI:29105"/>
        <label>1</label>
    </ligand>
</feature>
<feature type="binding site" evidence="2">
    <location>
        <position position="112"/>
    </location>
    <ligand>
        <name>Zn(2+)</name>
        <dbReference type="ChEBI" id="CHEBI:29105"/>
        <label>2</label>
    </ligand>
</feature>
<feature type="binding site" evidence="2">
    <location>
        <position position="115"/>
    </location>
    <ligand>
        <name>Zn(2+)</name>
        <dbReference type="ChEBI" id="CHEBI:29105"/>
        <label>2</label>
    </ligand>
</feature>
<feature type="binding site" evidence="2">
    <location>
        <position position="126"/>
    </location>
    <ligand>
        <name>Zn(2+)</name>
        <dbReference type="ChEBI" id="CHEBI:29105"/>
        <label>3</label>
    </ligand>
</feature>
<feature type="binding site" evidence="2">
    <location>
        <position position="128"/>
    </location>
    <ligand>
        <name>Zn(2+)</name>
        <dbReference type="ChEBI" id="CHEBI:29105"/>
        <label>3</label>
    </ligand>
</feature>
<feature type="binding site" evidence="2">
    <location>
        <position position="133"/>
    </location>
    <ligand>
        <name>Zn(2+)</name>
        <dbReference type="ChEBI" id="CHEBI:29105"/>
        <label>2</label>
    </ligand>
</feature>
<feature type="binding site" evidence="2">
    <location>
        <position position="136"/>
    </location>
    <ligand>
        <name>Zn(2+)</name>
        <dbReference type="ChEBI" id="CHEBI:29105"/>
        <label>2</label>
    </ligand>
</feature>
<feature type="binding site" evidence="2">
    <location>
        <position position="142"/>
    </location>
    <ligand>
        <name>Zn(2+)</name>
        <dbReference type="ChEBI" id="CHEBI:29105"/>
        <label>3</label>
    </ligand>
</feature>
<feature type="binding site" evidence="2">
    <location>
        <position position="144"/>
    </location>
    <ligand>
        <name>Zn(2+)</name>
        <dbReference type="ChEBI" id="CHEBI:29105"/>
        <label>3</label>
    </ligand>
</feature>
<feature type="sequence conflict" description="In Ref. 1; AAQ84334." evidence="5" ref="1">
    <original>E</original>
    <variation>K</variation>
    <location>
        <position position="12"/>
    </location>
</feature>
<feature type="sequence conflict" description="In Ref. 2; CM000131." evidence="5" ref="2">
    <original>M</original>
    <variation>T</variation>
    <location>
        <position position="135"/>
    </location>
</feature>
<organism>
    <name type="scientific">Oryza sativa subsp. indica</name>
    <name type="common">Rice</name>
    <dbReference type="NCBI Taxonomy" id="39946"/>
    <lineage>
        <taxon>Eukaryota</taxon>
        <taxon>Viridiplantae</taxon>
        <taxon>Streptophyta</taxon>
        <taxon>Embryophyta</taxon>
        <taxon>Tracheophyta</taxon>
        <taxon>Spermatophyta</taxon>
        <taxon>Magnoliopsida</taxon>
        <taxon>Liliopsida</taxon>
        <taxon>Poales</taxon>
        <taxon>Poaceae</taxon>
        <taxon>BOP clade</taxon>
        <taxon>Oryzoideae</taxon>
        <taxon>Oryzeae</taxon>
        <taxon>Oryzinae</taxon>
        <taxon>Oryza</taxon>
        <taxon>Oryza sativa</taxon>
    </lineage>
</organism>
<accession>A2YEZ6</accession>
<accession>Q69WY4</accession>
<accession>Q6VAG2</accession>
<name>SAP8_ORYSI</name>
<keyword id="KW-0479">Metal-binding</keyword>
<keyword id="KW-1185">Reference proteome</keyword>
<keyword id="KW-0346">Stress response</keyword>
<keyword id="KW-0862">Zinc</keyword>
<keyword id="KW-0863">Zinc-finger</keyword>
<evidence type="ECO:0000250" key="1"/>
<evidence type="ECO:0000255" key="2">
    <source>
        <dbReference type="PROSITE-ProRule" id="PRU00449"/>
    </source>
</evidence>
<evidence type="ECO:0000255" key="3">
    <source>
        <dbReference type="PROSITE-ProRule" id="PRU00451"/>
    </source>
</evidence>
<evidence type="ECO:0000269" key="4">
    <source>
    </source>
</evidence>
<evidence type="ECO:0000305" key="5"/>
<proteinExistence type="evidence at transcript level"/>
<reference key="1">
    <citation type="submission" date="2003-09" db="EMBL/GenBank/DDBJ databases">
        <title>Oryza sativa (indica cultivar-group) stress-associated protein-3 (SAP-3) mRNA.</title>
        <authorList>
            <person name="Vydehi K."/>
            <person name="Gupta A.K."/>
        </authorList>
    </citation>
    <scope>NUCLEOTIDE SEQUENCE [MRNA]</scope>
    <source>
        <strain>cv. IR50</strain>
        <tissue>Panicle</tissue>
    </source>
</reference>
<reference key="2">
    <citation type="journal article" date="2005" name="PLoS Biol.">
        <title>The genomes of Oryza sativa: a history of duplications.</title>
        <authorList>
            <person name="Yu J."/>
            <person name="Wang J."/>
            <person name="Lin W."/>
            <person name="Li S."/>
            <person name="Li H."/>
            <person name="Zhou J."/>
            <person name="Ni P."/>
            <person name="Dong W."/>
            <person name="Hu S."/>
            <person name="Zeng C."/>
            <person name="Zhang J."/>
            <person name="Zhang Y."/>
            <person name="Li R."/>
            <person name="Xu Z."/>
            <person name="Li S."/>
            <person name="Li X."/>
            <person name="Zheng H."/>
            <person name="Cong L."/>
            <person name="Lin L."/>
            <person name="Yin J."/>
            <person name="Geng J."/>
            <person name="Li G."/>
            <person name="Shi J."/>
            <person name="Liu J."/>
            <person name="Lv H."/>
            <person name="Li J."/>
            <person name="Wang J."/>
            <person name="Deng Y."/>
            <person name="Ran L."/>
            <person name="Shi X."/>
            <person name="Wang X."/>
            <person name="Wu Q."/>
            <person name="Li C."/>
            <person name="Ren X."/>
            <person name="Wang J."/>
            <person name="Wang X."/>
            <person name="Li D."/>
            <person name="Liu D."/>
            <person name="Zhang X."/>
            <person name="Ji Z."/>
            <person name="Zhao W."/>
            <person name="Sun Y."/>
            <person name="Zhang Z."/>
            <person name="Bao J."/>
            <person name="Han Y."/>
            <person name="Dong L."/>
            <person name="Ji J."/>
            <person name="Chen P."/>
            <person name="Wu S."/>
            <person name="Liu J."/>
            <person name="Xiao Y."/>
            <person name="Bu D."/>
            <person name="Tan J."/>
            <person name="Yang L."/>
            <person name="Ye C."/>
            <person name="Zhang J."/>
            <person name="Xu J."/>
            <person name="Zhou Y."/>
            <person name="Yu Y."/>
            <person name="Zhang B."/>
            <person name="Zhuang S."/>
            <person name="Wei H."/>
            <person name="Liu B."/>
            <person name="Lei M."/>
            <person name="Yu H."/>
            <person name="Li Y."/>
            <person name="Xu H."/>
            <person name="Wei S."/>
            <person name="He X."/>
            <person name="Fang L."/>
            <person name="Zhang Z."/>
            <person name="Zhang Y."/>
            <person name="Huang X."/>
            <person name="Su Z."/>
            <person name="Tong W."/>
            <person name="Li J."/>
            <person name="Tong Z."/>
            <person name="Li S."/>
            <person name="Ye J."/>
            <person name="Wang L."/>
            <person name="Fang L."/>
            <person name="Lei T."/>
            <person name="Chen C.-S."/>
            <person name="Chen H.-C."/>
            <person name="Xu Z."/>
            <person name="Li H."/>
            <person name="Huang H."/>
            <person name="Zhang F."/>
            <person name="Xu H."/>
            <person name="Li N."/>
            <person name="Zhao C."/>
            <person name="Li S."/>
            <person name="Dong L."/>
            <person name="Huang Y."/>
            <person name="Li L."/>
            <person name="Xi Y."/>
            <person name="Qi Q."/>
            <person name="Li W."/>
            <person name="Zhang B."/>
            <person name="Hu W."/>
            <person name="Zhang Y."/>
            <person name="Tian X."/>
            <person name="Jiao Y."/>
            <person name="Liang X."/>
            <person name="Jin J."/>
            <person name="Gao L."/>
            <person name="Zheng W."/>
            <person name="Hao B."/>
            <person name="Liu S.-M."/>
            <person name="Wang W."/>
            <person name="Yuan L."/>
            <person name="Cao M."/>
            <person name="McDermott J."/>
            <person name="Samudrala R."/>
            <person name="Wang J."/>
            <person name="Wong G.K.-S."/>
            <person name="Yang H."/>
        </authorList>
    </citation>
    <scope>NUCLEOTIDE SEQUENCE [LARGE SCALE GENOMIC DNA]</scope>
    <source>
        <strain>cv. 93-11</strain>
    </source>
</reference>
<reference key="3">
    <citation type="journal article" date="2006" name="Mol. Genet. Genomics">
        <title>Genome-wide analysis of the stress associated protein (SAP) gene family containing A20/AN1 zinc-finger(s) in rice and their phylogenetic relationship with Arabidopsis.</title>
        <authorList>
            <person name="Vij S."/>
            <person name="Tyagi A.K."/>
        </authorList>
    </citation>
    <scope>GENE FAMILY</scope>
    <scope>INDUCTION</scope>
</reference>
<gene>
    <name type="primary">SAP8</name>
    <name type="synonym">SAP3</name>
    <name type="ORF">OsI_022889</name>
</gene>
<sequence>MEHKETGCQQPEGPILCINNCGFFGSAATMNMCSKCHKEMIMKQEQAKLAASSIDSIVNGGDSGKEPIIAGHAEVAVAQVEVKTLVAQPAEIAGPSEGVTVNPKGREGPNRCSTCRKRVGLTGFNCRCGNLYCAMHRYSDKHDCQFDYRTAARDAIAKANPVVKAEKLDKI</sequence>
<comment type="function">
    <text evidence="1">May be involved in environmental stress response.</text>
</comment>
<comment type="induction">
    <text evidence="4">By cold, dehydration and salt stress.</text>
</comment>
<comment type="sequence caution" evidence="5">
    <conflict type="frameshift">
        <sequence resource="EMBL" id="CM000131"/>
    </conflict>
</comment>
<dbReference type="EMBL" id="AY345599">
    <property type="protein sequence ID" value="AAQ84334.1"/>
    <property type="molecule type" value="mRNA"/>
</dbReference>
<dbReference type="EMBL" id="CM000131">
    <property type="status" value="NOT_ANNOTATED_CDS"/>
    <property type="molecule type" value="Genomic_DNA"/>
</dbReference>
<dbReference type="SMR" id="A2YEZ6"/>
<dbReference type="STRING" id="39946.A2YEZ6"/>
<dbReference type="Proteomes" id="UP000007015">
    <property type="component" value="Chromosome 6"/>
</dbReference>
<dbReference type="GO" id="GO:0003677">
    <property type="term" value="F:DNA binding"/>
    <property type="evidence" value="ECO:0007669"/>
    <property type="project" value="InterPro"/>
</dbReference>
<dbReference type="GO" id="GO:0008270">
    <property type="term" value="F:zinc ion binding"/>
    <property type="evidence" value="ECO:0007669"/>
    <property type="project" value="UniProtKB-KW"/>
</dbReference>
<dbReference type="FunFam" id="4.10.1110.10:FF:000001">
    <property type="entry name" value="Zinc finger AN1-type containing 6"/>
    <property type="match status" value="1"/>
</dbReference>
<dbReference type="Gene3D" id="1.20.5.4770">
    <property type="match status" value="1"/>
</dbReference>
<dbReference type="Gene3D" id="4.10.1110.10">
    <property type="entry name" value="AN1-like Zinc finger"/>
    <property type="match status" value="1"/>
</dbReference>
<dbReference type="InterPro" id="IPR035896">
    <property type="entry name" value="AN1-like_Znf"/>
</dbReference>
<dbReference type="InterPro" id="IPR050652">
    <property type="entry name" value="AN1_A20_ZnFinger"/>
</dbReference>
<dbReference type="InterPro" id="IPR002653">
    <property type="entry name" value="Znf_A20"/>
</dbReference>
<dbReference type="InterPro" id="IPR000058">
    <property type="entry name" value="Znf_AN1"/>
</dbReference>
<dbReference type="PANTHER" id="PTHR10634">
    <property type="entry name" value="AN1-TYPE ZINC FINGER PROTEIN"/>
    <property type="match status" value="1"/>
</dbReference>
<dbReference type="PANTHER" id="PTHR10634:SF104">
    <property type="entry name" value="ZINC FINGER A20 AND AN1 DOMAIN-CONTAINING STRESS-ASSOCIATED PROTEIN 2"/>
    <property type="match status" value="1"/>
</dbReference>
<dbReference type="Pfam" id="PF01754">
    <property type="entry name" value="zf-A20"/>
    <property type="match status" value="1"/>
</dbReference>
<dbReference type="Pfam" id="PF01428">
    <property type="entry name" value="zf-AN1"/>
    <property type="match status" value="1"/>
</dbReference>
<dbReference type="SMART" id="SM00259">
    <property type="entry name" value="ZnF_A20"/>
    <property type="match status" value="1"/>
</dbReference>
<dbReference type="SMART" id="SM00154">
    <property type="entry name" value="ZnF_AN1"/>
    <property type="match status" value="1"/>
</dbReference>
<dbReference type="SUPFAM" id="SSF118310">
    <property type="entry name" value="AN1-like Zinc finger"/>
    <property type="match status" value="1"/>
</dbReference>
<dbReference type="SUPFAM" id="SSF57716">
    <property type="entry name" value="Glucocorticoid receptor-like (DNA-binding domain)"/>
    <property type="match status" value="1"/>
</dbReference>
<dbReference type="PROSITE" id="PS51036">
    <property type="entry name" value="ZF_A20"/>
    <property type="match status" value="1"/>
</dbReference>
<dbReference type="PROSITE" id="PS51039">
    <property type="entry name" value="ZF_AN1"/>
    <property type="match status" value="1"/>
</dbReference>